<organism>
    <name type="scientific">Danio rerio</name>
    <name type="common">Zebrafish</name>
    <name type="synonym">Brachydanio rerio</name>
    <dbReference type="NCBI Taxonomy" id="7955"/>
    <lineage>
        <taxon>Eukaryota</taxon>
        <taxon>Metazoa</taxon>
        <taxon>Chordata</taxon>
        <taxon>Craniata</taxon>
        <taxon>Vertebrata</taxon>
        <taxon>Euteleostomi</taxon>
        <taxon>Actinopterygii</taxon>
        <taxon>Neopterygii</taxon>
        <taxon>Teleostei</taxon>
        <taxon>Ostariophysi</taxon>
        <taxon>Cypriniformes</taxon>
        <taxon>Danionidae</taxon>
        <taxon>Danioninae</taxon>
        <taxon>Danio</taxon>
    </lineage>
</organism>
<accession>Q66I71</accession>
<comment type="function">
    <text evidence="2">Phosphorylates uridine and cytidine to uridine monophosphate and cytidine monophosphate. Does not phosphorylate deoxyribonucleosides or purine ribonucleosides. Can use ATP or GTP as a phosphate donor.</text>
</comment>
<comment type="catalytic activity">
    <reaction evidence="2">
        <text>uridine + ATP = UMP + ADP + H(+)</text>
        <dbReference type="Rhea" id="RHEA:16825"/>
        <dbReference type="ChEBI" id="CHEBI:15378"/>
        <dbReference type="ChEBI" id="CHEBI:16704"/>
        <dbReference type="ChEBI" id="CHEBI:30616"/>
        <dbReference type="ChEBI" id="CHEBI:57865"/>
        <dbReference type="ChEBI" id="CHEBI:456216"/>
        <dbReference type="EC" id="2.7.1.48"/>
    </reaction>
</comment>
<comment type="catalytic activity">
    <reaction evidence="2">
        <text>cytidine + ATP = CMP + ADP + H(+)</text>
        <dbReference type="Rhea" id="RHEA:24674"/>
        <dbReference type="ChEBI" id="CHEBI:15378"/>
        <dbReference type="ChEBI" id="CHEBI:17562"/>
        <dbReference type="ChEBI" id="CHEBI:30616"/>
        <dbReference type="ChEBI" id="CHEBI:60377"/>
        <dbReference type="ChEBI" id="CHEBI:456216"/>
        <dbReference type="EC" id="2.7.1.48"/>
    </reaction>
</comment>
<comment type="pathway">
    <text evidence="2">Pyrimidine metabolism; CTP biosynthesis via salvage pathway; CTP from cytidine: step 1/3.</text>
</comment>
<comment type="pathway">
    <text evidence="2">Pyrimidine metabolism; UMP biosynthesis via salvage pathway; UMP from uridine: step 1/1.</text>
</comment>
<comment type="similarity">
    <text evidence="4">Belongs to the uridine kinase family.</text>
</comment>
<keyword id="KW-0067">ATP-binding</keyword>
<keyword id="KW-0418">Kinase</keyword>
<keyword id="KW-0547">Nucleotide-binding</keyword>
<keyword id="KW-1185">Reference proteome</keyword>
<keyword id="KW-0808">Transferase</keyword>
<gene>
    <name type="primary">uck1</name>
    <name type="ORF">zgc:103645</name>
</gene>
<dbReference type="EC" id="2.7.1.48" evidence="2"/>
<dbReference type="EMBL" id="BC081503">
    <property type="protein sequence ID" value="AAH81503.1"/>
    <property type="molecule type" value="mRNA"/>
</dbReference>
<dbReference type="RefSeq" id="NP_001004666.1">
    <property type="nucleotide sequence ID" value="NM_001004666.1"/>
</dbReference>
<dbReference type="SMR" id="Q66I71"/>
<dbReference type="FunCoup" id="Q66I71">
    <property type="interactions" value="1055"/>
</dbReference>
<dbReference type="STRING" id="7955.ENSDARP00000065879"/>
<dbReference type="PaxDb" id="7955-ENSDARP00000065879"/>
<dbReference type="GeneID" id="447928"/>
<dbReference type="KEGG" id="dre:447928"/>
<dbReference type="AGR" id="ZFIN:ZDB-GENE-040912-113"/>
<dbReference type="CTD" id="83549"/>
<dbReference type="ZFIN" id="ZDB-GENE-040912-113">
    <property type="gene designation" value="uck1"/>
</dbReference>
<dbReference type="eggNOG" id="KOG4203">
    <property type="taxonomic scope" value="Eukaryota"/>
</dbReference>
<dbReference type="InParanoid" id="Q66I71"/>
<dbReference type="OrthoDB" id="10257085at2759"/>
<dbReference type="PhylomeDB" id="Q66I71"/>
<dbReference type="Reactome" id="R-DRE-73614">
    <property type="pathway name" value="Pyrimidine salvage"/>
</dbReference>
<dbReference type="UniPathway" id="UPA00574">
    <property type="reaction ID" value="UER00637"/>
</dbReference>
<dbReference type="UniPathway" id="UPA00579">
    <property type="reaction ID" value="UER00640"/>
</dbReference>
<dbReference type="PRO" id="PR:Q66I71"/>
<dbReference type="Proteomes" id="UP000000437">
    <property type="component" value="Chromosome 21"/>
</dbReference>
<dbReference type="GO" id="GO:0005737">
    <property type="term" value="C:cytoplasm"/>
    <property type="evidence" value="ECO:0000318"/>
    <property type="project" value="GO_Central"/>
</dbReference>
<dbReference type="GO" id="GO:0005524">
    <property type="term" value="F:ATP binding"/>
    <property type="evidence" value="ECO:0007669"/>
    <property type="project" value="UniProtKB-KW"/>
</dbReference>
<dbReference type="GO" id="GO:0043771">
    <property type="term" value="F:cytidine kinase activity"/>
    <property type="evidence" value="ECO:0000250"/>
    <property type="project" value="UniProtKB"/>
</dbReference>
<dbReference type="GO" id="GO:0004849">
    <property type="term" value="F:uridine kinase activity"/>
    <property type="evidence" value="ECO:0000250"/>
    <property type="project" value="UniProtKB"/>
</dbReference>
<dbReference type="GO" id="GO:0044211">
    <property type="term" value="P:CTP salvage"/>
    <property type="evidence" value="ECO:0000250"/>
    <property type="project" value="UniProtKB"/>
</dbReference>
<dbReference type="GO" id="GO:0044206">
    <property type="term" value="P:UMP salvage"/>
    <property type="evidence" value="ECO:0000250"/>
    <property type="project" value="UniProtKB"/>
</dbReference>
<dbReference type="CDD" id="cd02023">
    <property type="entry name" value="UMPK"/>
    <property type="match status" value="1"/>
</dbReference>
<dbReference type="FunFam" id="3.40.50.300:FF:000297">
    <property type="entry name" value="Uridine-cytidine kinase 2"/>
    <property type="match status" value="1"/>
</dbReference>
<dbReference type="Gene3D" id="3.40.50.300">
    <property type="entry name" value="P-loop containing nucleotide triphosphate hydrolases"/>
    <property type="match status" value="1"/>
</dbReference>
<dbReference type="InterPro" id="IPR027417">
    <property type="entry name" value="P-loop_NTPase"/>
</dbReference>
<dbReference type="InterPro" id="IPR006083">
    <property type="entry name" value="PRK/URK"/>
</dbReference>
<dbReference type="InterPro" id="IPR000764">
    <property type="entry name" value="Uridine_kinase-like"/>
</dbReference>
<dbReference type="NCBIfam" id="NF004018">
    <property type="entry name" value="PRK05480.1"/>
    <property type="match status" value="1"/>
</dbReference>
<dbReference type="NCBIfam" id="TIGR00235">
    <property type="entry name" value="udk"/>
    <property type="match status" value="1"/>
</dbReference>
<dbReference type="PANTHER" id="PTHR10285">
    <property type="entry name" value="URIDINE KINASE"/>
    <property type="match status" value="1"/>
</dbReference>
<dbReference type="Pfam" id="PF00485">
    <property type="entry name" value="PRK"/>
    <property type="match status" value="1"/>
</dbReference>
<dbReference type="PRINTS" id="PR00988">
    <property type="entry name" value="URIDINKINASE"/>
</dbReference>
<dbReference type="SUPFAM" id="SSF52540">
    <property type="entry name" value="P-loop containing nucleoside triphosphate hydrolases"/>
    <property type="match status" value="1"/>
</dbReference>
<reference key="1">
    <citation type="submission" date="2004-09" db="EMBL/GenBank/DDBJ databases">
        <authorList>
            <consortium name="NIH - Zebrafish Gene Collection (ZGC) project"/>
        </authorList>
    </citation>
    <scope>NUCLEOTIDE SEQUENCE [LARGE SCALE MRNA]</scope>
    <source>
        <tissue>Larva</tissue>
    </source>
</reference>
<sequence length="277" mass="31457">MNSSGLLCDNERPRHRPFLIGVSGGTASGKSTVCAKIMELLGQNKVDHHQRKVTIVSQDSFYRVLTPEQKAKALKGQYNFDHPDAFDTEFMCQTLKDIVEGKVVEVPTYDFVTHSRLPEKICVYPADVVLFEGILVFYTQEVRDMFHMKQFVDTDSDVRLSRRVLRDMNRGRDLEQILTQYTTFVKPAFEEFCLPTKKYADVIIPRGVDNMVAINLIVQHIQDILNGDICKWQRGSVNGHNHGRSLKRGVAEHGENPSGSSSNLTKRPLLEPSTRPH</sequence>
<feature type="chain" id="PRO_0000346101" description="Uridine-cytidine kinase 1">
    <location>
        <begin position="1"/>
        <end position="277"/>
    </location>
</feature>
<feature type="region of interest" description="Disordered" evidence="3">
    <location>
        <begin position="241"/>
        <end position="277"/>
    </location>
</feature>
<feature type="binding site" evidence="2">
    <location>
        <begin position="24"/>
        <end position="32"/>
    </location>
    <ligand>
        <name>ATP</name>
        <dbReference type="ChEBI" id="CHEBI:30616"/>
    </ligand>
</feature>
<feature type="binding site" evidence="1">
    <location>
        <position position="81"/>
    </location>
    <ligand>
        <name>substrate</name>
    </ligand>
</feature>
<feature type="binding site" evidence="1">
    <location>
        <position position="109"/>
    </location>
    <ligand>
        <name>substrate</name>
    </ligand>
</feature>
<feature type="binding site" evidence="1">
    <location>
        <position position="114"/>
    </location>
    <ligand>
        <name>substrate</name>
    </ligand>
</feature>
<feature type="binding site" evidence="1">
    <location>
        <position position="163"/>
    </location>
    <ligand>
        <name>substrate</name>
    </ligand>
</feature>
<feature type="binding site" evidence="1">
    <location>
        <position position="172"/>
    </location>
    <ligand>
        <name>substrate</name>
    </ligand>
</feature>
<feature type="binding site" evidence="1">
    <location>
        <position position="180"/>
    </location>
    <ligand>
        <name>substrate</name>
    </ligand>
</feature>
<feature type="binding site" evidence="2">
    <location>
        <position position="209"/>
    </location>
    <ligand>
        <name>ATP</name>
        <dbReference type="ChEBI" id="CHEBI:30616"/>
    </ligand>
</feature>
<protein>
    <recommendedName>
        <fullName>Uridine-cytidine kinase 1</fullName>
        <shortName>UCK 1</shortName>
        <ecNumber evidence="2">2.7.1.48</ecNumber>
    </recommendedName>
    <alternativeName>
        <fullName>Cytidine monophosphokinase 1</fullName>
    </alternativeName>
    <alternativeName>
        <fullName>Uridine monophosphokinase 1</fullName>
    </alternativeName>
</protein>
<proteinExistence type="evidence at transcript level"/>
<name>UCK1_DANRE</name>
<evidence type="ECO:0000250" key="1">
    <source>
        <dbReference type="UniProtKB" id="Q9BZX2"/>
    </source>
</evidence>
<evidence type="ECO:0000250" key="2">
    <source>
        <dbReference type="UniProtKB" id="Q9HA47"/>
    </source>
</evidence>
<evidence type="ECO:0000256" key="3">
    <source>
        <dbReference type="SAM" id="MobiDB-lite"/>
    </source>
</evidence>
<evidence type="ECO:0000305" key="4"/>